<comment type="function">
    <text evidence="1">Protein S19 forms a complex with S13 that binds strongly to the 16S ribosomal RNA.</text>
</comment>
<comment type="similarity">
    <text evidence="1">Belongs to the universal ribosomal protein uS19 family.</text>
</comment>
<feature type="chain" id="PRO_1000051110" description="Small ribosomal subunit protein uS19">
    <location>
        <begin position="1"/>
        <end position="92"/>
    </location>
</feature>
<protein>
    <recommendedName>
        <fullName evidence="1">Small ribosomal subunit protein uS19</fullName>
    </recommendedName>
    <alternativeName>
        <fullName evidence="2">30S ribosomal protein S19</fullName>
    </alternativeName>
</protein>
<name>RS19_RHOP5</name>
<accession>Q07KM2</accession>
<organism>
    <name type="scientific">Rhodopseudomonas palustris (strain BisA53)</name>
    <dbReference type="NCBI Taxonomy" id="316055"/>
    <lineage>
        <taxon>Bacteria</taxon>
        <taxon>Pseudomonadati</taxon>
        <taxon>Pseudomonadota</taxon>
        <taxon>Alphaproteobacteria</taxon>
        <taxon>Hyphomicrobiales</taxon>
        <taxon>Nitrobacteraceae</taxon>
        <taxon>Rhodopseudomonas</taxon>
    </lineage>
</organism>
<dbReference type="EMBL" id="CP000463">
    <property type="protein sequence ID" value="ABJ07512.1"/>
    <property type="molecule type" value="Genomic_DNA"/>
</dbReference>
<dbReference type="SMR" id="Q07KM2"/>
<dbReference type="STRING" id="316055.RPE_3582"/>
<dbReference type="KEGG" id="rpe:RPE_3582"/>
<dbReference type="eggNOG" id="COG0185">
    <property type="taxonomic scope" value="Bacteria"/>
</dbReference>
<dbReference type="HOGENOM" id="CLU_144911_0_1_5"/>
<dbReference type="OrthoDB" id="9797833at2"/>
<dbReference type="GO" id="GO:0005737">
    <property type="term" value="C:cytoplasm"/>
    <property type="evidence" value="ECO:0007669"/>
    <property type="project" value="UniProtKB-ARBA"/>
</dbReference>
<dbReference type="GO" id="GO:0015935">
    <property type="term" value="C:small ribosomal subunit"/>
    <property type="evidence" value="ECO:0007669"/>
    <property type="project" value="InterPro"/>
</dbReference>
<dbReference type="GO" id="GO:0019843">
    <property type="term" value="F:rRNA binding"/>
    <property type="evidence" value="ECO:0007669"/>
    <property type="project" value="UniProtKB-UniRule"/>
</dbReference>
<dbReference type="GO" id="GO:0003735">
    <property type="term" value="F:structural constituent of ribosome"/>
    <property type="evidence" value="ECO:0007669"/>
    <property type="project" value="InterPro"/>
</dbReference>
<dbReference type="GO" id="GO:0000028">
    <property type="term" value="P:ribosomal small subunit assembly"/>
    <property type="evidence" value="ECO:0007669"/>
    <property type="project" value="TreeGrafter"/>
</dbReference>
<dbReference type="GO" id="GO:0006412">
    <property type="term" value="P:translation"/>
    <property type="evidence" value="ECO:0007669"/>
    <property type="project" value="UniProtKB-UniRule"/>
</dbReference>
<dbReference type="FunFam" id="3.30.860.10:FF:000001">
    <property type="entry name" value="30S ribosomal protein S19"/>
    <property type="match status" value="1"/>
</dbReference>
<dbReference type="Gene3D" id="3.30.860.10">
    <property type="entry name" value="30s Ribosomal Protein S19, Chain A"/>
    <property type="match status" value="1"/>
</dbReference>
<dbReference type="HAMAP" id="MF_00531">
    <property type="entry name" value="Ribosomal_uS19"/>
    <property type="match status" value="1"/>
</dbReference>
<dbReference type="InterPro" id="IPR002222">
    <property type="entry name" value="Ribosomal_uS19"/>
</dbReference>
<dbReference type="InterPro" id="IPR005732">
    <property type="entry name" value="Ribosomal_uS19_bac-type"/>
</dbReference>
<dbReference type="InterPro" id="IPR020934">
    <property type="entry name" value="Ribosomal_uS19_CS"/>
</dbReference>
<dbReference type="InterPro" id="IPR023575">
    <property type="entry name" value="Ribosomal_uS19_SF"/>
</dbReference>
<dbReference type="NCBIfam" id="TIGR01050">
    <property type="entry name" value="rpsS_bact"/>
    <property type="match status" value="1"/>
</dbReference>
<dbReference type="PANTHER" id="PTHR11880">
    <property type="entry name" value="RIBOSOMAL PROTEIN S19P FAMILY MEMBER"/>
    <property type="match status" value="1"/>
</dbReference>
<dbReference type="PANTHER" id="PTHR11880:SF8">
    <property type="entry name" value="SMALL RIBOSOMAL SUBUNIT PROTEIN US19M"/>
    <property type="match status" value="1"/>
</dbReference>
<dbReference type="Pfam" id="PF00203">
    <property type="entry name" value="Ribosomal_S19"/>
    <property type="match status" value="1"/>
</dbReference>
<dbReference type="PIRSF" id="PIRSF002144">
    <property type="entry name" value="Ribosomal_S19"/>
    <property type="match status" value="1"/>
</dbReference>
<dbReference type="PRINTS" id="PR00975">
    <property type="entry name" value="RIBOSOMALS19"/>
</dbReference>
<dbReference type="SUPFAM" id="SSF54570">
    <property type="entry name" value="Ribosomal protein S19"/>
    <property type="match status" value="1"/>
</dbReference>
<dbReference type="PROSITE" id="PS00323">
    <property type="entry name" value="RIBOSOMAL_S19"/>
    <property type="match status" value="1"/>
</dbReference>
<evidence type="ECO:0000255" key="1">
    <source>
        <dbReference type="HAMAP-Rule" id="MF_00531"/>
    </source>
</evidence>
<evidence type="ECO:0000305" key="2"/>
<keyword id="KW-0687">Ribonucleoprotein</keyword>
<keyword id="KW-0689">Ribosomal protein</keyword>
<keyword id="KW-0694">RNA-binding</keyword>
<keyword id="KW-0699">rRNA-binding</keyword>
<proteinExistence type="inferred from homology"/>
<gene>
    <name evidence="1" type="primary">rpsS</name>
    <name type="ordered locus">RPE_3582</name>
</gene>
<sequence length="92" mass="10232">MVRSVWKGPFVEGSLLKKADAARASGRHDVIKIWSRRSTILPQFVGLVFGVYNGQKHVPVSINEEMVGHKFGEFSPTRTFHGHSGDKKAKKA</sequence>
<reference key="1">
    <citation type="submission" date="2006-09" db="EMBL/GenBank/DDBJ databases">
        <title>Complete sequence of Rhodopseudomonas palustris BisA53.</title>
        <authorList>
            <consortium name="US DOE Joint Genome Institute"/>
            <person name="Copeland A."/>
            <person name="Lucas S."/>
            <person name="Lapidus A."/>
            <person name="Barry K."/>
            <person name="Detter J.C."/>
            <person name="Glavina del Rio T."/>
            <person name="Hammon N."/>
            <person name="Israni S."/>
            <person name="Dalin E."/>
            <person name="Tice H."/>
            <person name="Pitluck S."/>
            <person name="Chain P."/>
            <person name="Malfatti S."/>
            <person name="Shin M."/>
            <person name="Vergez L."/>
            <person name="Schmutz J."/>
            <person name="Larimer F."/>
            <person name="Land M."/>
            <person name="Hauser L."/>
            <person name="Pelletier D.A."/>
            <person name="Kyrpides N."/>
            <person name="Kim E."/>
            <person name="Harwood C.S."/>
            <person name="Oda Y."/>
            <person name="Richardson P."/>
        </authorList>
    </citation>
    <scope>NUCLEOTIDE SEQUENCE [LARGE SCALE GENOMIC DNA]</scope>
    <source>
        <strain>BisA53</strain>
    </source>
</reference>